<keyword id="KW-0413">Isomerase</keyword>
<keyword id="KW-0819">tRNA processing</keyword>
<dbReference type="EC" id="5.4.99.12" evidence="1"/>
<dbReference type="EMBL" id="CP000123">
    <property type="protein sequence ID" value="ABC01853.1"/>
    <property type="molecule type" value="Genomic_DNA"/>
</dbReference>
<dbReference type="RefSeq" id="WP_011387524.1">
    <property type="nucleotide sequence ID" value="NC_007633.1"/>
</dbReference>
<dbReference type="SMR" id="Q2SRI4"/>
<dbReference type="GeneID" id="23778380"/>
<dbReference type="KEGG" id="mcp:MCAP_0665"/>
<dbReference type="HOGENOM" id="CLU_014673_0_1_14"/>
<dbReference type="PhylomeDB" id="Q2SRI4"/>
<dbReference type="Proteomes" id="UP000001928">
    <property type="component" value="Chromosome"/>
</dbReference>
<dbReference type="GO" id="GO:0003723">
    <property type="term" value="F:RNA binding"/>
    <property type="evidence" value="ECO:0007669"/>
    <property type="project" value="InterPro"/>
</dbReference>
<dbReference type="GO" id="GO:0160147">
    <property type="term" value="F:tRNA pseudouridine(38-40) synthase activity"/>
    <property type="evidence" value="ECO:0007669"/>
    <property type="project" value="UniProtKB-EC"/>
</dbReference>
<dbReference type="GO" id="GO:0031119">
    <property type="term" value="P:tRNA pseudouridine synthesis"/>
    <property type="evidence" value="ECO:0007669"/>
    <property type="project" value="UniProtKB-UniRule"/>
</dbReference>
<dbReference type="CDD" id="cd02570">
    <property type="entry name" value="PseudoU_synth_EcTruA"/>
    <property type="match status" value="1"/>
</dbReference>
<dbReference type="Gene3D" id="3.30.70.660">
    <property type="entry name" value="Pseudouridine synthase I, catalytic domain, C-terminal subdomain"/>
    <property type="match status" value="1"/>
</dbReference>
<dbReference type="Gene3D" id="3.30.70.580">
    <property type="entry name" value="Pseudouridine synthase I, catalytic domain, N-terminal subdomain"/>
    <property type="match status" value="1"/>
</dbReference>
<dbReference type="HAMAP" id="MF_00171">
    <property type="entry name" value="TruA"/>
    <property type="match status" value="1"/>
</dbReference>
<dbReference type="InterPro" id="IPR020103">
    <property type="entry name" value="PsdUridine_synth_cat_dom_sf"/>
</dbReference>
<dbReference type="InterPro" id="IPR001406">
    <property type="entry name" value="PsdUridine_synth_TruA"/>
</dbReference>
<dbReference type="InterPro" id="IPR020097">
    <property type="entry name" value="PsdUridine_synth_TruA_a/b_dom"/>
</dbReference>
<dbReference type="InterPro" id="IPR020095">
    <property type="entry name" value="PsdUridine_synth_TruA_C"/>
</dbReference>
<dbReference type="InterPro" id="IPR020094">
    <property type="entry name" value="TruA/RsuA/RluB/E/F_N"/>
</dbReference>
<dbReference type="PANTHER" id="PTHR11142">
    <property type="entry name" value="PSEUDOURIDYLATE SYNTHASE"/>
    <property type="match status" value="1"/>
</dbReference>
<dbReference type="PANTHER" id="PTHR11142:SF0">
    <property type="entry name" value="TRNA PSEUDOURIDINE SYNTHASE-LIKE 1"/>
    <property type="match status" value="1"/>
</dbReference>
<dbReference type="Pfam" id="PF01416">
    <property type="entry name" value="PseudoU_synth_1"/>
    <property type="match status" value="1"/>
</dbReference>
<dbReference type="PIRSF" id="PIRSF001430">
    <property type="entry name" value="tRNA_psdUrid_synth"/>
    <property type="match status" value="1"/>
</dbReference>
<dbReference type="SUPFAM" id="SSF55120">
    <property type="entry name" value="Pseudouridine synthase"/>
    <property type="match status" value="1"/>
</dbReference>
<feature type="chain" id="PRO_1000017119" description="tRNA pseudouridine synthase A">
    <location>
        <begin position="1"/>
        <end position="249"/>
    </location>
</feature>
<feature type="active site" description="Nucleophile" evidence="1">
    <location>
        <position position="54"/>
    </location>
</feature>
<feature type="binding site" evidence="1">
    <location>
        <position position="111"/>
    </location>
    <ligand>
        <name>substrate</name>
    </ligand>
</feature>
<organism>
    <name type="scientific">Mycoplasma capricolum subsp. capricolum (strain California kid / ATCC 27343 / NCTC 10154)</name>
    <dbReference type="NCBI Taxonomy" id="340047"/>
    <lineage>
        <taxon>Bacteria</taxon>
        <taxon>Bacillati</taxon>
        <taxon>Mycoplasmatota</taxon>
        <taxon>Mollicutes</taxon>
        <taxon>Mycoplasmataceae</taxon>
        <taxon>Mycoplasma</taxon>
    </lineage>
</organism>
<reference key="1">
    <citation type="submission" date="2005-09" db="EMBL/GenBank/DDBJ databases">
        <authorList>
            <person name="Glass J.I."/>
            <person name="Lartigue C."/>
            <person name="Pfannkoch C."/>
            <person name="Baden-Tillson H."/>
            <person name="Smith H.O."/>
            <person name="Venter J.C."/>
            <person name="Roske K."/>
            <person name="Wise K.S."/>
            <person name="Calcutt M.J."/>
            <person name="Nelson W.C."/>
            <person name="Nierman W.C."/>
        </authorList>
    </citation>
    <scope>NUCLEOTIDE SEQUENCE [LARGE SCALE GENOMIC DNA]</scope>
    <source>
        <strain>California kid / ATCC 27343 / NCTC 10154</strain>
    </source>
</reference>
<protein>
    <recommendedName>
        <fullName evidence="1">tRNA pseudouridine synthase A</fullName>
        <ecNumber evidence="1">5.4.99.12</ecNumber>
    </recommendedName>
    <alternativeName>
        <fullName evidence="1">tRNA pseudouridine(38-40) synthase</fullName>
    </alternativeName>
    <alternativeName>
        <fullName evidence="1">tRNA pseudouridylate synthase I</fullName>
    </alternativeName>
    <alternativeName>
        <fullName evidence="1">tRNA-uridine isomerase I</fullName>
    </alternativeName>
</protein>
<evidence type="ECO:0000255" key="1">
    <source>
        <dbReference type="HAMAP-Rule" id="MF_00171"/>
    </source>
</evidence>
<name>TRUA_MYCCT</name>
<gene>
    <name evidence="1" type="primary">truA</name>
    <name type="ordered locus">MCAP_0665</name>
</gene>
<sequence length="249" mass="29246">MKTGILLTLCYDGSNYHGWINQTNSISTQTVLNKAIKKVIKTSEFKTIGASKTDANVHALDQKVLLIIYFTPILEKFINAINKALPEDIRILNAKFVDPNFNIREVDYKIYNYYINDHKFDIFTNRYEYFWKHSKIDILKLQEIFNLFIGEHEFKLFSGLKENEWDNYQTKRIIDDIKVLRINNKVVIQFKATGFIRYQIRIIIANCLNAYLNYKVNINTLTEMLQGIGKKTPFIIKAKGLVLQEIKFK</sequence>
<proteinExistence type="inferred from homology"/>
<comment type="function">
    <text evidence="1">Formation of pseudouridine at positions 38, 39 and 40 in the anticodon stem and loop of transfer RNAs.</text>
</comment>
<comment type="catalytic activity">
    <reaction evidence="1">
        <text>uridine(38/39/40) in tRNA = pseudouridine(38/39/40) in tRNA</text>
        <dbReference type="Rhea" id="RHEA:22376"/>
        <dbReference type="Rhea" id="RHEA-COMP:10085"/>
        <dbReference type="Rhea" id="RHEA-COMP:10087"/>
        <dbReference type="ChEBI" id="CHEBI:65314"/>
        <dbReference type="ChEBI" id="CHEBI:65315"/>
        <dbReference type="EC" id="5.4.99.12"/>
    </reaction>
</comment>
<comment type="subunit">
    <text evidence="1">Homodimer.</text>
</comment>
<comment type="similarity">
    <text evidence="1">Belongs to the tRNA pseudouridine synthase TruA family.</text>
</comment>
<accession>Q2SRI4</accession>